<gene>
    <name evidence="1" type="primary">rplJ</name>
    <name type="ordered locus">Plav_2727</name>
</gene>
<protein>
    <recommendedName>
        <fullName evidence="1">Large ribosomal subunit protein uL10</fullName>
    </recommendedName>
    <alternativeName>
        <fullName evidence="2">50S ribosomal protein L10</fullName>
    </alternativeName>
</protein>
<feature type="chain" id="PRO_1000079551" description="Large ribosomal subunit protein uL10">
    <location>
        <begin position="1"/>
        <end position="172"/>
    </location>
</feature>
<sequence length="172" mass="17986">MDRAEKSELVTHLNGVFANAGVVVVAHYSGLTVNQMSDLRSRMAKAGASFKVTKNRLAKLALDGTPMTEIGDLFAGPTAIAYSQDPVAAPKVAIEFAKENQKLVILGGAMGQTVLDAKAVKQLADLPSLDELRAKIVGMIQTPATRIAGVLQAPGGQLARVLNAYATKSEAA</sequence>
<comment type="function">
    <text evidence="1">Forms part of the ribosomal stalk, playing a central role in the interaction of the ribosome with GTP-bound translation factors.</text>
</comment>
<comment type="subunit">
    <text evidence="1">Part of the ribosomal stalk of the 50S ribosomal subunit. The N-terminus interacts with L11 and the large rRNA to form the base of the stalk. The C-terminus forms an elongated spine to which L12 dimers bind in a sequential fashion forming a multimeric L10(L12)X complex.</text>
</comment>
<comment type="similarity">
    <text evidence="1">Belongs to the universal ribosomal protein uL10 family.</text>
</comment>
<reference key="1">
    <citation type="journal article" date="2011" name="Stand. Genomic Sci.">
        <title>Complete genome sequence of Parvibaculum lavamentivorans type strain (DS-1(T)).</title>
        <authorList>
            <person name="Schleheck D."/>
            <person name="Weiss M."/>
            <person name="Pitluck S."/>
            <person name="Bruce D."/>
            <person name="Land M.L."/>
            <person name="Han S."/>
            <person name="Saunders E."/>
            <person name="Tapia R."/>
            <person name="Detter C."/>
            <person name="Brettin T."/>
            <person name="Han J."/>
            <person name="Woyke T."/>
            <person name="Goodwin L."/>
            <person name="Pennacchio L."/>
            <person name="Nolan M."/>
            <person name="Cook A.M."/>
            <person name="Kjelleberg S."/>
            <person name="Thomas T."/>
        </authorList>
    </citation>
    <scope>NUCLEOTIDE SEQUENCE [LARGE SCALE GENOMIC DNA]</scope>
    <source>
        <strain>DS-1 / DSM 13023 / NCIMB 13966</strain>
    </source>
</reference>
<proteinExistence type="inferred from homology"/>
<organism>
    <name type="scientific">Parvibaculum lavamentivorans (strain DS-1 / DSM 13023 / NCIMB 13966)</name>
    <dbReference type="NCBI Taxonomy" id="402881"/>
    <lineage>
        <taxon>Bacteria</taxon>
        <taxon>Pseudomonadati</taxon>
        <taxon>Pseudomonadota</taxon>
        <taxon>Alphaproteobacteria</taxon>
        <taxon>Hyphomicrobiales</taxon>
        <taxon>Parvibaculaceae</taxon>
        <taxon>Parvibaculum</taxon>
    </lineage>
</organism>
<keyword id="KW-1185">Reference proteome</keyword>
<keyword id="KW-0687">Ribonucleoprotein</keyword>
<keyword id="KW-0689">Ribosomal protein</keyword>
<keyword id="KW-0694">RNA-binding</keyword>
<keyword id="KW-0699">rRNA-binding</keyword>
<accession>A7HWQ2</accession>
<name>RL10_PARL1</name>
<dbReference type="EMBL" id="CP000774">
    <property type="protein sequence ID" value="ABS64335.1"/>
    <property type="molecule type" value="Genomic_DNA"/>
</dbReference>
<dbReference type="RefSeq" id="WP_012111650.1">
    <property type="nucleotide sequence ID" value="NC_009719.1"/>
</dbReference>
<dbReference type="SMR" id="A7HWQ2"/>
<dbReference type="STRING" id="402881.Plav_2727"/>
<dbReference type="KEGG" id="pla:Plav_2727"/>
<dbReference type="eggNOG" id="COG0244">
    <property type="taxonomic scope" value="Bacteria"/>
</dbReference>
<dbReference type="HOGENOM" id="CLU_092227_0_0_5"/>
<dbReference type="OrthoDB" id="9791972at2"/>
<dbReference type="Proteomes" id="UP000006377">
    <property type="component" value="Chromosome"/>
</dbReference>
<dbReference type="GO" id="GO:0015934">
    <property type="term" value="C:large ribosomal subunit"/>
    <property type="evidence" value="ECO:0007669"/>
    <property type="project" value="InterPro"/>
</dbReference>
<dbReference type="GO" id="GO:0070180">
    <property type="term" value="F:large ribosomal subunit rRNA binding"/>
    <property type="evidence" value="ECO:0007669"/>
    <property type="project" value="UniProtKB-UniRule"/>
</dbReference>
<dbReference type="GO" id="GO:0003735">
    <property type="term" value="F:structural constituent of ribosome"/>
    <property type="evidence" value="ECO:0007669"/>
    <property type="project" value="InterPro"/>
</dbReference>
<dbReference type="GO" id="GO:0006412">
    <property type="term" value="P:translation"/>
    <property type="evidence" value="ECO:0007669"/>
    <property type="project" value="UniProtKB-UniRule"/>
</dbReference>
<dbReference type="CDD" id="cd05797">
    <property type="entry name" value="Ribosomal_L10"/>
    <property type="match status" value="1"/>
</dbReference>
<dbReference type="Gene3D" id="3.30.70.1730">
    <property type="match status" value="1"/>
</dbReference>
<dbReference type="Gene3D" id="6.10.250.290">
    <property type="match status" value="1"/>
</dbReference>
<dbReference type="HAMAP" id="MF_00362">
    <property type="entry name" value="Ribosomal_uL10"/>
    <property type="match status" value="1"/>
</dbReference>
<dbReference type="InterPro" id="IPR001790">
    <property type="entry name" value="Ribosomal_uL10"/>
</dbReference>
<dbReference type="InterPro" id="IPR043141">
    <property type="entry name" value="Ribosomal_uL10-like_sf"/>
</dbReference>
<dbReference type="InterPro" id="IPR022973">
    <property type="entry name" value="Ribosomal_uL10_bac"/>
</dbReference>
<dbReference type="InterPro" id="IPR047865">
    <property type="entry name" value="Ribosomal_uL10_bac_type"/>
</dbReference>
<dbReference type="InterPro" id="IPR002363">
    <property type="entry name" value="Ribosomal_uL10_CS_bac"/>
</dbReference>
<dbReference type="NCBIfam" id="NF000955">
    <property type="entry name" value="PRK00099.1-1"/>
    <property type="match status" value="1"/>
</dbReference>
<dbReference type="PANTHER" id="PTHR11560">
    <property type="entry name" value="39S RIBOSOMAL PROTEIN L10, MITOCHONDRIAL"/>
    <property type="match status" value="1"/>
</dbReference>
<dbReference type="Pfam" id="PF00466">
    <property type="entry name" value="Ribosomal_L10"/>
    <property type="match status" value="1"/>
</dbReference>
<dbReference type="SUPFAM" id="SSF160369">
    <property type="entry name" value="Ribosomal protein L10-like"/>
    <property type="match status" value="1"/>
</dbReference>
<dbReference type="PROSITE" id="PS01109">
    <property type="entry name" value="RIBOSOMAL_L10"/>
    <property type="match status" value="1"/>
</dbReference>
<evidence type="ECO:0000255" key="1">
    <source>
        <dbReference type="HAMAP-Rule" id="MF_00362"/>
    </source>
</evidence>
<evidence type="ECO:0000305" key="2"/>